<protein>
    <recommendedName>
        <fullName evidence="1">Large ribosomal subunit protein uL24</fullName>
    </recommendedName>
    <alternativeName>
        <fullName evidence="2">50S ribosomal protein L24</fullName>
    </alternativeName>
</protein>
<keyword id="KW-0687">Ribonucleoprotein</keyword>
<keyword id="KW-0689">Ribosomal protein</keyword>
<keyword id="KW-0694">RNA-binding</keyword>
<keyword id="KW-0699">rRNA-binding</keyword>
<sequence>MHVKKGDKVQVISGKDKGKQGVILAAFPKKNRVIVEGVNIVKKHAKPSQANPQGGIITKEAPIHVSKVMPLDPKTGLPTRIGYKIVDGKKVRYAKRSGEILDK</sequence>
<proteinExistence type="inferred from homology"/>
<evidence type="ECO:0000255" key="1">
    <source>
        <dbReference type="HAMAP-Rule" id="MF_01326"/>
    </source>
</evidence>
<evidence type="ECO:0000305" key="2"/>
<dbReference type="EMBL" id="CP001638">
    <property type="protein sequence ID" value="ACS23062.1"/>
    <property type="molecule type" value="Genomic_DNA"/>
</dbReference>
<dbReference type="SMR" id="C5D3S8"/>
<dbReference type="STRING" id="471223.GWCH70_0122"/>
<dbReference type="KEGG" id="gwc:GWCH70_0122"/>
<dbReference type="eggNOG" id="COG0198">
    <property type="taxonomic scope" value="Bacteria"/>
</dbReference>
<dbReference type="HOGENOM" id="CLU_093315_2_0_9"/>
<dbReference type="OrthoDB" id="9807419at2"/>
<dbReference type="GO" id="GO:1990904">
    <property type="term" value="C:ribonucleoprotein complex"/>
    <property type="evidence" value="ECO:0007669"/>
    <property type="project" value="UniProtKB-KW"/>
</dbReference>
<dbReference type="GO" id="GO:0005840">
    <property type="term" value="C:ribosome"/>
    <property type="evidence" value="ECO:0007669"/>
    <property type="project" value="UniProtKB-KW"/>
</dbReference>
<dbReference type="GO" id="GO:0019843">
    <property type="term" value="F:rRNA binding"/>
    <property type="evidence" value="ECO:0007669"/>
    <property type="project" value="UniProtKB-UniRule"/>
</dbReference>
<dbReference type="GO" id="GO:0003735">
    <property type="term" value="F:structural constituent of ribosome"/>
    <property type="evidence" value="ECO:0007669"/>
    <property type="project" value="InterPro"/>
</dbReference>
<dbReference type="GO" id="GO:0006412">
    <property type="term" value="P:translation"/>
    <property type="evidence" value="ECO:0007669"/>
    <property type="project" value="UniProtKB-UniRule"/>
</dbReference>
<dbReference type="CDD" id="cd06089">
    <property type="entry name" value="KOW_RPL26"/>
    <property type="match status" value="1"/>
</dbReference>
<dbReference type="FunFam" id="2.30.30.30:FF:000004">
    <property type="entry name" value="50S ribosomal protein L24"/>
    <property type="match status" value="1"/>
</dbReference>
<dbReference type="Gene3D" id="2.30.30.30">
    <property type="match status" value="1"/>
</dbReference>
<dbReference type="HAMAP" id="MF_01326_B">
    <property type="entry name" value="Ribosomal_uL24_B"/>
    <property type="match status" value="1"/>
</dbReference>
<dbReference type="InterPro" id="IPR005824">
    <property type="entry name" value="KOW"/>
</dbReference>
<dbReference type="InterPro" id="IPR014722">
    <property type="entry name" value="Rib_uL2_dom2"/>
</dbReference>
<dbReference type="InterPro" id="IPR003256">
    <property type="entry name" value="Ribosomal_uL24"/>
</dbReference>
<dbReference type="InterPro" id="IPR005825">
    <property type="entry name" value="Ribosomal_uL24_CS"/>
</dbReference>
<dbReference type="InterPro" id="IPR041988">
    <property type="entry name" value="Ribosomal_uL24_KOW"/>
</dbReference>
<dbReference type="InterPro" id="IPR008991">
    <property type="entry name" value="Translation_prot_SH3-like_sf"/>
</dbReference>
<dbReference type="NCBIfam" id="TIGR01079">
    <property type="entry name" value="rplX_bact"/>
    <property type="match status" value="1"/>
</dbReference>
<dbReference type="PANTHER" id="PTHR12903">
    <property type="entry name" value="MITOCHONDRIAL RIBOSOMAL PROTEIN L24"/>
    <property type="match status" value="1"/>
</dbReference>
<dbReference type="Pfam" id="PF00467">
    <property type="entry name" value="KOW"/>
    <property type="match status" value="1"/>
</dbReference>
<dbReference type="Pfam" id="PF17136">
    <property type="entry name" value="ribosomal_L24"/>
    <property type="match status" value="1"/>
</dbReference>
<dbReference type="SMART" id="SM00739">
    <property type="entry name" value="KOW"/>
    <property type="match status" value="1"/>
</dbReference>
<dbReference type="SUPFAM" id="SSF50104">
    <property type="entry name" value="Translation proteins SH3-like domain"/>
    <property type="match status" value="1"/>
</dbReference>
<dbReference type="PROSITE" id="PS01108">
    <property type="entry name" value="RIBOSOMAL_L24"/>
    <property type="match status" value="1"/>
</dbReference>
<gene>
    <name evidence="1" type="primary">rplX</name>
    <name type="ordered locus">GWCH70_0122</name>
</gene>
<name>RL24_GEOSW</name>
<feature type="chain" id="PRO_1000214546" description="Large ribosomal subunit protein uL24">
    <location>
        <begin position="1"/>
        <end position="103"/>
    </location>
</feature>
<reference key="1">
    <citation type="submission" date="2009-06" db="EMBL/GenBank/DDBJ databases">
        <title>Complete sequence of chromosome of Geopacillus sp. WCH70.</title>
        <authorList>
            <consortium name="US DOE Joint Genome Institute"/>
            <person name="Lucas S."/>
            <person name="Copeland A."/>
            <person name="Lapidus A."/>
            <person name="Glavina del Rio T."/>
            <person name="Dalin E."/>
            <person name="Tice H."/>
            <person name="Bruce D."/>
            <person name="Goodwin L."/>
            <person name="Pitluck S."/>
            <person name="Chertkov O."/>
            <person name="Brettin T."/>
            <person name="Detter J.C."/>
            <person name="Han C."/>
            <person name="Larimer F."/>
            <person name="Land M."/>
            <person name="Hauser L."/>
            <person name="Kyrpides N."/>
            <person name="Mikhailova N."/>
            <person name="Brumm P."/>
            <person name="Mead D.A."/>
            <person name="Richardson P."/>
        </authorList>
    </citation>
    <scope>NUCLEOTIDE SEQUENCE [LARGE SCALE GENOMIC DNA]</scope>
    <source>
        <strain>WCH70</strain>
    </source>
</reference>
<organism>
    <name type="scientific">Geobacillus sp. (strain WCH70)</name>
    <dbReference type="NCBI Taxonomy" id="471223"/>
    <lineage>
        <taxon>Bacteria</taxon>
        <taxon>Bacillati</taxon>
        <taxon>Bacillota</taxon>
        <taxon>Bacilli</taxon>
        <taxon>Bacillales</taxon>
        <taxon>Anoxybacillaceae</taxon>
        <taxon>Geobacillus</taxon>
    </lineage>
</organism>
<accession>C5D3S8</accession>
<comment type="function">
    <text evidence="1">One of two assembly initiator proteins, it binds directly to the 5'-end of the 23S rRNA, where it nucleates assembly of the 50S subunit.</text>
</comment>
<comment type="function">
    <text evidence="1">One of the proteins that surrounds the polypeptide exit tunnel on the outside of the subunit.</text>
</comment>
<comment type="subunit">
    <text evidence="1">Part of the 50S ribosomal subunit.</text>
</comment>
<comment type="similarity">
    <text evidence="1">Belongs to the universal ribosomal protein uL24 family.</text>
</comment>